<reference key="1">
    <citation type="journal article" date="2001" name="Nature">
        <title>Complete genome sequence of a multiple drug resistant Salmonella enterica serovar Typhi CT18.</title>
        <authorList>
            <person name="Parkhill J."/>
            <person name="Dougan G."/>
            <person name="James K.D."/>
            <person name="Thomson N.R."/>
            <person name="Pickard D."/>
            <person name="Wain J."/>
            <person name="Churcher C.M."/>
            <person name="Mungall K.L."/>
            <person name="Bentley S.D."/>
            <person name="Holden M.T.G."/>
            <person name="Sebaihia M."/>
            <person name="Baker S."/>
            <person name="Basham D."/>
            <person name="Brooks K."/>
            <person name="Chillingworth T."/>
            <person name="Connerton P."/>
            <person name="Cronin A."/>
            <person name="Davis P."/>
            <person name="Davies R.M."/>
            <person name="Dowd L."/>
            <person name="White N."/>
            <person name="Farrar J."/>
            <person name="Feltwell T."/>
            <person name="Hamlin N."/>
            <person name="Haque A."/>
            <person name="Hien T.T."/>
            <person name="Holroyd S."/>
            <person name="Jagels K."/>
            <person name="Krogh A."/>
            <person name="Larsen T.S."/>
            <person name="Leather S."/>
            <person name="Moule S."/>
            <person name="O'Gaora P."/>
            <person name="Parry C."/>
            <person name="Quail M.A."/>
            <person name="Rutherford K.M."/>
            <person name="Simmonds M."/>
            <person name="Skelton J."/>
            <person name="Stevens K."/>
            <person name="Whitehead S."/>
            <person name="Barrell B.G."/>
        </authorList>
    </citation>
    <scope>NUCLEOTIDE SEQUENCE [LARGE SCALE GENOMIC DNA]</scope>
    <source>
        <strain>CT18</strain>
    </source>
</reference>
<reference key="2">
    <citation type="journal article" date="2003" name="J. Bacteriol.">
        <title>Comparative genomics of Salmonella enterica serovar Typhi strains Ty2 and CT18.</title>
        <authorList>
            <person name="Deng W."/>
            <person name="Liou S.-R."/>
            <person name="Plunkett G. III"/>
            <person name="Mayhew G.F."/>
            <person name="Rose D.J."/>
            <person name="Burland V."/>
            <person name="Kodoyianni V."/>
            <person name="Schwartz D.C."/>
            <person name="Blattner F.R."/>
        </authorList>
    </citation>
    <scope>NUCLEOTIDE SEQUENCE [LARGE SCALE GENOMIC DNA]</scope>
    <source>
        <strain>ATCC 700931 / Ty2</strain>
    </source>
</reference>
<keyword id="KW-0963">Cytoplasm</keyword>
<keyword id="KW-0238">DNA-binding</keyword>
<evidence type="ECO:0000255" key="1">
    <source>
        <dbReference type="HAMAP-Rule" id="MF_00274"/>
    </source>
</evidence>
<accession>P0A8B9</accession>
<accession>P09994</accession>
<accession>P17577</accession>
<sequence length="109" mass="12015">MFGKGGLGNLMKQAQQMQEKMQKMQEEIAQLEVTGESGAGLVKVTINGAHNCRRVEIDPSLLEDDKEMLEDLVAAAFNDAARRIEETQKEKMASVSSGMQLPPGFKMPF</sequence>
<organism>
    <name type="scientific">Salmonella typhi</name>
    <dbReference type="NCBI Taxonomy" id="90370"/>
    <lineage>
        <taxon>Bacteria</taxon>
        <taxon>Pseudomonadati</taxon>
        <taxon>Pseudomonadota</taxon>
        <taxon>Gammaproteobacteria</taxon>
        <taxon>Enterobacterales</taxon>
        <taxon>Enterobacteriaceae</taxon>
        <taxon>Salmonella</taxon>
    </lineage>
</organism>
<proteinExistence type="inferred from homology"/>
<gene>
    <name evidence="1" type="primary">ybaB</name>
    <name type="ordered locus">STY0529</name>
    <name type="ordered locus">t2375</name>
</gene>
<comment type="function">
    <text evidence="1">Binds to DNA and alters its conformation. May be involved in regulation of gene expression, nucleoid organization and DNA protection.</text>
</comment>
<comment type="subunit">
    <text evidence="1">Homodimer.</text>
</comment>
<comment type="subcellular location">
    <subcellularLocation>
        <location evidence="1">Cytoplasm</location>
        <location evidence="1">Nucleoid</location>
    </subcellularLocation>
</comment>
<comment type="similarity">
    <text evidence="1">Belongs to the YbaB/EbfC family.</text>
</comment>
<dbReference type="EMBL" id="AL513382">
    <property type="protein sequence ID" value="CAD04970.1"/>
    <property type="molecule type" value="Genomic_DNA"/>
</dbReference>
<dbReference type="EMBL" id="AE014613">
    <property type="protein sequence ID" value="AAO69966.1"/>
    <property type="molecule type" value="Genomic_DNA"/>
</dbReference>
<dbReference type="RefSeq" id="NP_455081.1">
    <property type="nucleotide sequence ID" value="NC_003198.1"/>
</dbReference>
<dbReference type="RefSeq" id="WP_000467098.1">
    <property type="nucleotide sequence ID" value="NZ_WSUR01000008.1"/>
</dbReference>
<dbReference type="SMR" id="P0A8B9"/>
<dbReference type="STRING" id="220341.gene:17584550"/>
<dbReference type="KEGG" id="stt:t2375"/>
<dbReference type="KEGG" id="sty:STY0529"/>
<dbReference type="PATRIC" id="fig|220341.7.peg.531"/>
<dbReference type="eggNOG" id="COG0718">
    <property type="taxonomic scope" value="Bacteria"/>
</dbReference>
<dbReference type="HOGENOM" id="CLU_140930_0_0_6"/>
<dbReference type="OMA" id="MGNMMKQ"/>
<dbReference type="OrthoDB" id="9808738at2"/>
<dbReference type="Proteomes" id="UP000000541">
    <property type="component" value="Chromosome"/>
</dbReference>
<dbReference type="Proteomes" id="UP000002670">
    <property type="component" value="Chromosome"/>
</dbReference>
<dbReference type="GO" id="GO:0043590">
    <property type="term" value="C:bacterial nucleoid"/>
    <property type="evidence" value="ECO:0007669"/>
    <property type="project" value="UniProtKB-UniRule"/>
</dbReference>
<dbReference type="GO" id="GO:0005829">
    <property type="term" value="C:cytosol"/>
    <property type="evidence" value="ECO:0007669"/>
    <property type="project" value="TreeGrafter"/>
</dbReference>
<dbReference type="GO" id="GO:0003677">
    <property type="term" value="F:DNA binding"/>
    <property type="evidence" value="ECO:0007669"/>
    <property type="project" value="UniProtKB-UniRule"/>
</dbReference>
<dbReference type="FunFam" id="3.30.1310.10:FF:000001">
    <property type="entry name" value="Nucleoid-associated protein YbaB"/>
    <property type="match status" value="1"/>
</dbReference>
<dbReference type="Gene3D" id="3.30.1310.10">
    <property type="entry name" value="Nucleoid-associated protein YbaB-like domain"/>
    <property type="match status" value="1"/>
</dbReference>
<dbReference type="HAMAP" id="MF_00274">
    <property type="entry name" value="DNA_YbaB_EbfC"/>
    <property type="match status" value="1"/>
</dbReference>
<dbReference type="InterPro" id="IPR036894">
    <property type="entry name" value="YbaB-like_sf"/>
</dbReference>
<dbReference type="InterPro" id="IPR004401">
    <property type="entry name" value="YbaB/EbfC"/>
</dbReference>
<dbReference type="NCBIfam" id="TIGR00103">
    <property type="entry name" value="DNA_YbaB_EbfC"/>
    <property type="match status" value="1"/>
</dbReference>
<dbReference type="PANTHER" id="PTHR33449">
    <property type="entry name" value="NUCLEOID-ASSOCIATED PROTEIN YBAB"/>
    <property type="match status" value="1"/>
</dbReference>
<dbReference type="PANTHER" id="PTHR33449:SF1">
    <property type="entry name" value="NUCLEOID-ASSOCIATED PROTEIN YBAB"/>
    <property type="match status" value="1"/>
</dbReference>
<dbReference type="Pfam" id="PF02575">
    <property type="entry name" value="YbaB_DNA_bd"/>
    <property type="match status" value="1"/>
</dbReference>
<dbReference type="PIRSF" id="PIRSF004555">
    <property type="entry name" value="UCP004555"/>
    <property type="match status" value="1"/>
</dbReference>
<dbReference type="SUPFAM" id="SSF82607">
    <property type="entry name" value="YbaB-like"/>
    <property type="match status" value="1"/>
</dbReference>
<feature type="chain" id="PRO_0000170431" description="Nucleoid-associated protein YbaB">
    <location>
        <begin position="1"/>
        <end position="109"/>
    </location>
</feature>
<protein>
    <recommendedName>
        <fullName evidence="1">Nucleoid-associated protein YbaB</fullName>
    </recommendedName>
</protein>
<name>YBAB_SALTI</name>